<protein>
    <recommendedName>
        <fullName>Protein MGARP</fullName>
    </recommendedName>
    <alternativeName>
        <fullName>Corneal endothelium-specific protein 1</fullName>
        <shortName>CESP-1</shortName>
    </alternativeName>
    <alternativeName>
        <fullName>Hypoxia up-regulated mitochondrial movement regulator protein</fullName>
    </alternativeName>
    <alternativeName>
        <fullName>Mitochondria-localized glutamic acid-rich protein</fullName>
    </alternativeName>
    <alternativeName>
        <fullName>Ovary-specific acidic protein</fullName>
    </alternativeName>
</protein>
<gene>
    <name type="primary">MGARP</name>
    <name type="synonym">C4orf49</name>
    <name type="synonym">CESP1</name>
    <name type="synonym">HUMMR</name>
    <name type="synonym">OSAP</name>
    <name type="ORF">GS3582</name>
</gene>
<proteinExistence type="evidence at protein level"/>
<feature type="chain" id="PRO_0000318764" description="Protein MGARP">
    <location>
        <begin position="1"/>
        <end position="240"/>
    </location>
</feature>
<feature type="topological domain" description="Cytoplasmic" evidence="1">
    <location>
        <begin position="1"/>
        <end position="40"/>
    </location>
</feature>
<feature type="transmembrane region" description="Helical; Anchor for type IV membrane protein" evidence="2">
    <location>
        <begin position="41"/>
        <end position="63"/>
    </location>
</feature>
<feature type="topological domain" description="Mitochondrial intermembrane" evidence="1">
    <location>
        <begin position="64"/>
        <end position="240"/>
    </location>
</feature>
<feature type="region of interest" description="Disordered" evidence="3">
    <location>
        <begin position="166"/>
        <end position="240"/>
    </location>
</feature>
<feature type="compositionally biased region" description="Low complexity" evidence="3">
    <location>
        <begin position="170"/>
        <end position="181"/>
    </location>
</feature>
<feature type="compositionally biased region" description="Basic and acidic residues" evidence="3">
    <location>
        <begin position="191"/>
        <end position="201"/>
    </location>
</feature>
<feature type="compositionally biased region" description="Acidic residues" evidence="3">
    <location>
        <begin position="202"/>
        <end position="213"/>
    </location>
</feature>
<feature type="compositionally biased region" description="Low complexity" evidence="3">
    <location>
        <begin position="228"/>
        <end position="240"/>
    </location>
</feature>
<feature type="sequence variant" id="VAR_051256" description="In dbSNP:rs3208941.">
    <original>A</original>
    <variation>T</variation>
    <location>
        <position position="128"/>
    </location>
</feature>
<feature type="sequence conflict" description="In Ref. 2; AAG59896." evidence="10" ref="2">
    <original>G</original>
    <variation>RANLQPVDISATNAIGCLISAFVFLVHLV</variation>
    <location>
        <position position="240"/>
    </location>
</feature>
<dbReference type="EMBL" id="AF484960">
    <property type="protein sequence ID" value="AAM09685.1"/>
    <property type="molecule type" value="mRNA"/>
</dbReference>
<dbReference type="EMBL" id="AF329088">
    <property type="protein sequence ID" value="AAG59896.1"/>
    <property type="molecule type" value="mRNA"/>
</dbReference>
<dbReference type="EMBL" id="CH471056">
    <property type="protein sequence ID" value="EAX05122.1"/>
    <property type="molecule type" value="Genomic_DNA"/>
</dbReference>
<dbReference type="EMBL" id="BC104173">
    <property type="protein sequence ID" value="AAI04174.1"/>
    <property type="molecule type" value="mRNA"/>
</dbReference>
<dbReference type="EMBL" id="BC104174">
    <property type="protein sequence ID" value="AAI04175.1"/>
    <property type="molecule type" value="mRNA"/>
</dbReference>
<dbReference type="CCDS" id="CCDS43269.1"/>
<dbReference type="RefSeq" id="NP_116012.2">
    <property type="nucleotide sequence ID" value="NM_032623.4"/>
</dbReference>
<dbReference type="BioGRID" id="124220">
    <property type="interactions" value="259"/>
</dbReference>
<dbReference type="FunCoup" id="Q8TDB4">
    <property type="interactions" value="66"/>
</dbReference>
<dbReference type="IntAct" id="Q8TDB4">
    <property type="interactions" value="222"/>
</dbReference>
<dbReference type="MINT" id="Q8TDB4"/>
<dbReference type="STRING" id="9606.ENSP00000381928"/>
<dbReference type="GlyGen" id="Q8TDB4">
    <property type="glycosylation" value="1 site, 1 O-linked glycan (1 site)"/>
</dbReference>
<dbReference type="iPTMnet" id="Q8TDB4"/>
<dbReference type="PhosphoSitePlus" id="Q8TDB4"/>
<dbReference type="BioMuta" id="MGARP"/>
<dbReference type="DMDM" id="74715889"/>
<dbReference type="jPOST" id="Q8TDB4"/>
<dbReference type="MassIVE" id="Q8TDB4"/>
<dbReference type="PaxDb" id="9606-ENSP00000381928"/>
<dbReference type="PeptideAtlas" id="Q8TDB4"/>
<dbReference type="ProteomicsDB" id="74255"/>
<dbReference type="Pumba" id="Q8TDB4"/>
<dbReference type="Antibodypedia" id="7361">
    <property type="antibodies" value="121 antibodies from 19 providers"/>
</dbReference>
<dbReference type="DNASU" id="84709"/>
<dbReference type="Ensembl" id="ENST00000398955.2">
    <property type="protein sequence ID" value="ENSP00000381928.1"/>
    <property type="gene ID" value="ENSG00000137463.5"/>
</dbReference>
<dbReference type="GeneID" id="84709"/>
<dbReference type="KEGG" id="hsa:84709"/>
<dbReference type="MANE-Select" id="ENST00000398955.2">
    <property type="protein sequence ID" value="ENSP00000381928.1"/>
    <property type="RefSeq nucleotide sequence ID" value="NM_032623.4"/>
    <property type="RefSeq protein sequence ID" value="NP_116012.2"/>
</dbReference>
<dbReference type="UCSC" id="uc003ihr.1">
    <property type="organism name" value="human"/>
</dbReference>
<dbReference type="AGR" id="HGNC:29969"/>
<dbReference type="CTD" id="84709"/>
<dbReference type="DisGeNET" id="84709"/>
<dbReference type="GeneCards" id="MGARP"/>
<dbReference type="HGNC" id="HGNC:29969">
    <property type="gene designation" value="MGARP"/>
</dbReference>
<dbReference type="HPA" id="ENSG00000137463">
    <property type="expression patterns" value="Group enriched (adrenal gland, retina)"/>
</dbReference>
<dbReference type="MIM" id="619684">
    <property type="type" value="gene"/>
</dbReference>
<dbReference type="neXtProt" id="NX_Q8TDB4"/>
<dbReference type="OpenTargets" id="ENSG00000137463"/>
<dbReference type="PharmGKB" id="PA164717327"/>
<dbReference type="VEuPathDB" id="HostDB:ENSG00000137463"/>
<dbReference type="eggNOG" id="ENOG502S6ZU">
    <property type="taxonomic scope" value="Eukaryota"/>
</dbReference>
<dbReference type="GeneTree" id="ENSGT00440000037338"/>
<dbReference type="HOGENOM" id="CLU_088276_0_0_1"/>
<dbReference type="InParanoid" id="Q8TDB4"/>
<dbReference type="OMA" id="YAYKTIT"/>
<dbReference type="OrthoDB" id="9950323at2759"/>
<dbReference type="PAN-GO" id="Q8TDB4">
    <property type="GO annotations" value="1 GO annotation based on evolutionary models"/>
</dbReference>
<dbReference type="PhylomeDB" id="Q8TDB4"/>
<dbReference type="TreeFam" id="TF336324"/>
<dbReference type="PathwayCommons" id="Q8TDB4"/>
<dbReference type="SignaLink" id="Q8TDB4"/>
<dbReference type="BioGRID-ORCS" id="84709">
    <property type="hits" value="14 hits in 1152 CRISPR screens"/>
</dbReference>
<dbReference type="GenomeRNAi" id="84709"/>
<dbReference type="Pharos" id="Q8TDB4">
    <property type="development level" value="Tbio"/>
</dbReference>
<dbReference type="PRO" id="PR:Q8TDB4"/>
<dbReference type="Proteomes" id="UP000005640">
    <property type="component" value="Chromosome 4"/>
</dbReference>
<dbReference type="RNAct" id="Q8TDB4">
    <property type="molecule type" value="protein"/>
</dbReference>
<dbReference type="Bgee" id="ENSG00000137463">
    <property type="expression patterns" value="Expressed in adrenal tissue and 108 other cell types or tissues"/>
</dbReference>
<dbReference type="GO" id="GO:1904115">
    <property type="term" value="C:axon cytoplasm"/>
    <property type="evidence" value="ECO:0007669"/>
    <property type="project" value="GOC"/>
</dbReference>
<dbReference type="GO" id="GO:0005743">
    <property type="term" value="C:mitochondrial inner membrane"/>
    <property type="evidence" value="ECO:0000250"/>
    <property type="project" value="UniProtKB"/>
</dbReference>
<dbReference type="GO" id="GO:0005741">
    <property type="term" value="C:mitochondrial outer membrane"/>
    <property type="evidence" value="ECO:0000250"/>
    <property type="project" value="UniProtKB"/>
</dbReference>
<dbReference type="GO" id="GO:0005739">
    <property type="term" value="C:mitochondrion"/>
    <property type="evidence" value="ECO:0000314"/>
    <property type="project" value="UniProtKB"/>
</dbReference>
<dbReference type="GO" id="GO:0008089">
    <property type="term" value="P:anterograde axonal transport"/>
    <property type="evidence" value="ECO:0000250"/>
    <property type="project" value="UniProtKB"/>
</dbReference>
<dbReference type="GO" id="GO:0061564">
    <property type="term" value="P:axon development"/>
    <property type="evidence" value="ECO:0000250"/>
    <property type="project" value="UniProtKB"/>
</dbReference>
<dbReference type="GO" id="GO:0019896">
    <property type="term" value="P:axonal transport of mitochondrion"/>
    <property type="evidence" value="ECO:0000250"/>
    <property type="project" value="UniProtKB"/>
</dbReference>
<dbReference type="GO" id="GO:0097211">
    <property type="term" value="P:cellular response to gonadotropin-releasing hormone"/>
    <property type="evidence" value="ECO:0000250"/>
    <property type="project" value="UniProtKB"/>
</dbReference>
<dbReference type="GO" id="GO:0071456">
    <property type="term" value="P:cellular response to hypoxia"/>
    <property type="evidence" value="ECO:0000250"/>
    <property type="project" value="UniProtKB"/>
</dbReference>
<dbReference type="GO" id="GO:0071383">
    <property type="term" value="P:cellular response to steroid hormone stimulus"/>
    <property type="evidence" value="ECO:0000250"/>
    <property type="project" value="UniProtKB"/>
</dbReference>
<dbReference type="GO" id="GO:0021987">
    <property type="term" value="P:cerebral cortex development"/>
    <property type="evidence" value="ECO:0000250"/>
    <property type="project" value="UniProtKB"/>
</dbReference>
<dbReference type="GO" id="GO:2000171">
    <property type="term" value="P:negative regulation of dendrite development"/>
    <property type="evidence" value="ECO:0000250"/>
    <property type="project" value="UniProtKB"/>
</dbReference>
<dbReference type="GO" id="GO:0006626">
    <property type="term" value="P:protein targeting to mitochondrion"/>
    <property type="evidence" value="ECO:0000250"/>
    <property type="project" value="UniProtKB"/>
</dbReference>
<dbReference type="GO" id="GO:0010821">
    <property type="term" value="P:regulation of mitochondrion organization"/>
    <property type="evidence" value="ECO:0000250"/>
    <property type="project" value="UniProtKB"/>
</dbReference>
<dbReference type="GO" id="GO:0008090">
    <property type="term" value="P:retrograde axonal transport"/>
    <property type="evidence" value="ECO:0000250"/>
    <property type="project" value="UniProtKB"/>
</dbReference>
<dbReference type="InterPro" id="IPR026093">
    <property type="entry name" value="MGARP"/>
</dbReference>
<dbReference type="InterPro" id="IPR032773">
    <property type="entry name" value="MGARP_N"/>
</dbReference>
<dbReference type="PANTHER" id="PTHR22910">
    <property type="entry name" value="PROTEIN MGARP"/>
    <property type="match status" value="1"/>
</dbReference>
<dbReference type="PANTHER" id="PTHR22910:SF6">
    <property type="entry name" value="PROTEIN MGARP"/>
    <property type="match status" value="1"/>
</dbReference>
<dbReference type="Pfam" id="PF14962">
    <property type="entry name" value="AIF-MLS"/>
    <property type="match status" value="1"/>
</dbReference>
<reference key="1">
    <citation type="journal article" date="2002" name="Invest. Ophthalmol. Vis. Sci.">
        <title>Construction of human corneal endothelial cDNA library and identification of novel active genes.</title>
        <authorList>
            <person name="Sakai R."/>
            <person name="Kinouchi T."/>
            <person name="Kawamoto S."/>
            <person name="Dana M.R."/>
            <person name="Hamamoto T."/>
            <person name="Tsuru T."/>
            <person name="Okubo K."/>
            <person name="Yamagami S."/>
        </authorList>
    </citation>
    <scope>NUCLEOTIDE SEQUENCE [MRNA]</scope>
    <scope>TISSUE SPECIFICITY</scope>
    <source>
        <tissue>Corneal endothelium</tissue>
    </source>
</reference>
<reference key="2">
    <citation type="journal article" date="2003" name="Mol. Cell. Endocrinol.">
        <title>The generation and characterization of an ovary-selective cDNA library.</title>
        <authorList>
            <person name="Tanaka M."/>
            <person name="Hennebold J.D."/>
            <person name="Miyakoshi K."/>
            <person name="Teranishi T."/>
            <person name="Ueno K."/>
            <person name="Adashi E.Y."/>
        </authorList>
    </citation>
    <scope>NUCLEOTIDE SEQUENCE [MRNA]</scope>
    <scope>TISSUE SPECIFICITY</scope>
    <source>
        <tissue>Ovary</tissue>
    </source>
</reference>
<reference key="3">
    <citation type="submission" date="2005-09" db="EMBL/GenBank/DDBJ databases">
        <authorList>
            <person name="Mural R.J."/>
            <person name="Istrail S."/>
            <person name="Sutton G.G."/>
            <person name="Florea L."/>
            <person name="Halpern A.L."/>
            <person name="Mobarry C.M."/>
            <person name="Lippert R."/>
            <person name="Walenz B."/>
            <person name="Shatkay H."/>
            <person name="Dew I."/>
            <person name="Miller J.R."/>
            <person name="Flanigan M.J."/>
            <person name="Edwards N.J."/>
            <person name="Bolanos R."/>
            <person name="Fasulo D."/>
            <person name="Halldorsson B.V."/>
            <person name="Hannenhalli S."/>
            <person name="Turner R."/>
            <person name="Yooseph S."/>
            <person name="Lu F."/>
            <person name="Nusskern D.R."/>
            <person name="Shue B.C."/>
            <person name="Zheng X.H."/>
            <person name="Zhong F."/>
            <person name="Delcher A.L."/>
            <person name="Huson D.H."/>
            <person name="Kravitz S.A."/>
            <person name="Mouchard L."/>
            <person name="Reinert K."/>
            <person name="Remington K.A."/>
            <person name="Clark A.G."/>
            <person name="Waterman M.S."/>
            <person name="Eichler E.E."/>
            <person name="Adams M.D."/>
            <person name="Hunkapiller M.W."/>
            <person name="Myers E.W."/>
            <person name="Venter J.C."/>
        </authorList>
    </citation>
    <scope>NUCLEOTIDE SEQUENCE [LARGE SCALE GENOMIC DNA]</scope>
</reference>
<reference key="4">
    <citation type="journal article" date="2004" name="Genome Res.">
        <title>The status, quality, and expansion of the NIH full-length cDNA project: the Mammalian Gene Collection (MGC).</title>
        <authorList>
            <consortium name="The MGC Project Team"/>
        </authorList>
    </citation>
    <scope>NUCLEOTIDE SEQUENCE [LARGE SCALE MRNA]</scope>
</reference>
<reference key="5">
    <citation type="journal article" date="2006" name="Invest. Ophthalmol. Vis. Sci.">
        <title>Distribution of CESP-1 protein in the corneal endothelium and other tissues.</title>
        <authorList>
            <person name="Kinouchi R."/>
            <person name="Kinouchi T."/>
            <person name="Hamamoto T."/>
            <person name="Saito T."/>
            <person name="Tavares A."/>
            <person name="Tsuru T."/>
            <person name="Yamagami S."/>
        </authorList>
    </citation>
    <scope>SUBCELLULAR LOCATION</scope>
    <scope>TISSUE SPECIFICITY</scope>
</reference>
<reference key="6">
    <citation type="journal article" date="2009" name="Endocrinology">
        <title>Expression of ovary-specific acidic protein in steroidogenic tissues: a possible role in steroidogenesis.</title>
        <authorList>
            <person name="Matsumoto T."/>
            <person name="Minegishi K."/>
            <person name="Ishimoto H."/>
            <person name="Tanaka M."/>
            <person name="Hennebold J.D."/>
            <person name="Teranishi T."/>
            <person name="Hattori Y."/>
            <person name="Furuya M."/>
            <person name="Higuchi T."/>
            <person name="Asai S."/>
            <person name="Kim S.H."/>
            <person name="Miyakoshi K."/>
            <person name="Yoshimura Y."/>
        </authorList>
    </citation>
    <scope>TISSUE SPECIFICITY</scope>
</reference>
<reference key="7">
    <citation type="journal article" date="2009" name="J. Cell Biol.">
        <title>HUMMR, a hypoxia- and HIF-1alpha-inducible protein, alters mitochondrial distribution and transport.</title>
        <authorList>
            <person name="Li Y."/>
            <person name="Lim S."/>
            <person name="Hoffman D."/>
            <person name="Aspenstrom P."/>
            <person name="Federoff H.J."/>
            <person name="Rempe D.A."/>
        </authorList>
    </citation>
    <scope>INTERACTION WITH RHOT2</scope>
    <scope>TISSUE SPECIFICITY</scope>
</reference>
<reference key="8">
    <citation type="journal article" date="2011" name="BMC Syst. Biol.">
        <title>Initial characterization of the human central proteome.</title>
        <authorList>
            <person name="Burkard T.R."/>
            <person name="Planyavsky M."/>
            <person name="Kaupe I."/>
            <person name="Breitwieser F.P."/>
            <person name="Buerckstuemmer T."/>
            <person name="Bennett K.L."/>
            <person name="Superti-Furga G."/>
            <person name="Colinge J."/>
        </authorList>
    </citation>
    <scope>IDENTIFICATION BY MASS SPECTROMETRY [LARGE SCALE ANALYSIS]</scope>
</reference>
<reference key="9">
    <citation type="journal article" date="2011" name="Endocrinology">
        <title>The expression of a mitochondria-localized glutamic acid-rich protein (MGARP/OSAP) is under the regulation of the HPG axis.</title>
        <authorList>
            <person name="Zhou M."/>
            <person name="Wang Y."/>
            <person name="Qi S."/>
            <person name="Wang J."/>
            <person name="Zhang S."/>
        </authorList>
    </citation>
    <scope>SUBCELLULAR LOCATION</scope>
</reference>
<keyword id="KW-0472">Membrane</keyword>
<keyword id="KW-0496">Mitochondrion</keyword>
<keyword id="KW-0999">Mitochondrion inner membrane</keyword>
<keyword id="KW-1000">Mitochondrion outer membrane</keyword>
<keyword id="KW-1267">Proteomics identification</keyword>
<keyword id="KW-1185">Reference proteome</keyword>
<keyword id="KW-0812">Transmembrane</keyword>
<keyword id="KW-1133">Transmembrane helix</keyword>
<organism>
    <name type="scientific">Homo sapiens</name>
    <name type="common">Human</name>
    <dbReference type="NCBI Taxonomy" id="9606"/>
    <lineage>
        <taxon>Eukaryota</taxon>
        <taxon>Metazoa</taxon>
        <taxon>Chordata</taxon>
        <taxon>Craniata</taxon>
        <taxon>Vertebrata</taxon>
        <taxon>Euteleostomi</taxon>
        <taxon>Mammalia</taxon>
        <taxon>Eutheria</taxon>
        <taxon>Euarchontoglires</taxon>
        <taxon>Primates</taxon>
        <taxon>Haplorrhini</taxon>
        <taxon>Catarrhini</taxon>
        <taxon>Hominidae</taxon>
        <taxon>Homo</taxon>
    </lineage>
</organism>
<comment type="function">
    <text evidence="1">Plays a role in the trafficking of mitochondria along microtubules. Regulates the kinesin-mediated axonal transport of mitochondria to nerve terminals along microtubules during hypoxia. Participates in the translocation of TRAK2/GRIF1 from the cytoplasm to the mitochondrion. Also plays a role in steroidogenesis through maintenance of mitochondrial abundance and morphology (By similarity). Plays an inhibitory role during neocortex development by regulating mitochondrial morphology, distribution and motility in neocortical neurons (By similarity).</text>
</comment>
<comment type="subunit">
    <text evidence="1 8">Interacts with RHOT1/Miro-1, TRAK1/OIP106 and TRAK2/GRIF1 (By similarity). Interacts with RHOT2/Miro-2.</text>
</comment>
<comment type="interaction">
    <interactant intactId="EBI-4397720">
        <id>Q8TDB4</id>
    </interactant>
    <interactant intactId="EBI-640741">
        <id>P01023</id>
        <label>A2M</label>
    </interactant>
    <organismsDiffer>false</organismsDiffer>
    <experiments>3</experiments>
</comment>
<comment type="interaction">
    <interactant intactId="EBI-4397720">
        <id>Q8TDB4</id>
    </interactant>
    <interactant intactId="EBI-25928834">
        <id>A0A0S2Z5Q7</id>
        <label>ALS2</label>
    </interactant>
    <organismsDiffer>false</organismsDiffer>
    <experiments>3</experiments>
</comment>
<comment type="interaction">
    <interactant intactId="EBI-4397720">
        <id>Q8TDB4</id>
    </interactant>
    <interactant intactId="EBI-21535880">
        <id>Q92870-2</id>
        <label>APBB2</label>
    </interactant>
    <organismsDiffer>false</organismsDiffer>
    <experiments>3</experiments>
</comment>
<comment type="interaction">
    <interactant intactId="EBI-4397720">
        <id>Q8TDB4</id>
    </interactant>
    <interactant intactId="EBI-77613">
        <id>P05067</id>
        <label>APP</label>
    </interactant>
    <organismsDiffer>false</organismsDiffer>
    <experiments>3</experiments>
</comment>
<comment type="interaction">
    <interactant intactId="EBI-4397720">
        <id>Q8TDB4</id>
    </interactant>
    <interactant intactId="EBI-17264467">
        <id>P05067-2</id>
        <label>APP</label>
    </interactant>
    <organismsDiffer>false</organismsDiffer>
    <experiments>3</experiments>
</comment>
<comment type="interaction">
    <interactant intactId="EBI-4397720">
        <id>Q8TDB4</id>
    </interactant>
    <interactant intactId="EBI-930964">
        <id>P54253</id>
        <label>ATXN1</label>
    </interactant>
    <organismsDiffer>false</organismsDiffer>
    <experiments>6</experiments>
</comment>
<comment type="interaction">
    <interactant intactId="EBI-4397720">
        <id>Q8TDB4</id>
    </interactant>
    <interactant intactId="EBI-10968534">
        <id>P50570-2</id>
        <label>DNM2</label>
    </interactant>
    <organismsDiffer>false</organismsDiffer>
    <experiments>3</experiments>
</comment>
<comment type="interaction">
    <interactant intactId="EBI-4397720">
        <id>Q8TDB4</id>
    </interactant>
    <interactant intactId="EBI-11110431">
        <id>Q8TB36</id>
        <label>GDAP1</label>
    </interactant>
    <organismsDiffer>false</organismsDiffer>
    <experiments>3</experiments>
</comment>
<comment type="interaction">
    <interactant intactId="EBI-4397720">
        <id>Q8TDB4</id>
    </interactant>
    <interactant intactId="EBI-466029">
        <id>P42858</id>
        <label>HTT</label>
    </interactant>
    <organismsDiffer>false</organismsDiffer>
    <experiments>21</experiments>
</comment>
<comment type="interaction">
    <interactant intactId="EBI-4397720">
        <id>Q8TDB4</id>
    </interactant>
    <interactant intactId="EBI-1189067">
        <id>P51608</id>
        <label>MECP2</label>
    </interactant>
    <organismsDiffer>false</organismsDiffer>
    <experiments>3</experiments>
</comment>
<comment type="interaction">
    <interactant intactId="EBI-4397720">
        <id>Q8TDB4</id>
    </interactant>
    <interactant intactId="EBI-748974">
        <id>Q96CV9</id>
        <label>OPTN</label>
    </interactant>
    <organismsDiffer>false</organismsDiffer>
    <experiments>3</experiments>
</comment>
<comment type="interaction">
    <interactant intactId="EBI-4397720">
        <id>Q8TDB4</id>
    </interactant>
    <interactant intactId="EBI-50433196">
        <id>A0A6Q8PF08</id>
        <label>PMP22</label>
    </interactant>
    <organismsDiffer>false</organismsDiffer>
    <experiments>3</experiments>
</comment>
<comment type="interaction">
    <interactant intactId="EBI-4397720">
        <id>Q8TDB4</id>
    </interactant>
    <interactant intactId="EBI-21251460">
        <id>O60260-5</id>
        <label>PRKN</label>
    </interactant>
    <organismsDiffer>false</organismsDiffer>
    <experiments>6</experiments>
</comment>
<comment type="interaction">
    <interactant intactId="EBI-4397720">
        <id>Q8TDB4</id>
    </interactant>
    <interactant intactId="EBI-11047108">
        <id>P49768-2</id>
        <label>PSEN1</label>
    </interactant>
    <organismsDiffer>false</organismsDiffer>
    <experiments>6</experiments>
</comment>
<comment type="interaction">
    <interactant intactId="EBI-4397720">
        <id>Q8TDB4</id>
    </interactant>
    <interactant intactId="EBI-2010251">
        <id>P49810</id>
        <label>PSEN2</label>
    </interactant>
    <organismsDiffer>false</organismsDiffer>
    <experiments>3</experiments>
</comment>
<comment type="interaction">
    <interactant intactId="EBI-4397720">
        <id>Q8TDB4</id>
    </interactant>
    <interactant intactId="EBI-395421">
        <id>Q16637</id>
        <label>SMN2</label>
    </interactant>
    <organismsDiffer>false</organismsDiffer>
    <experiments>3</experiments>
</comment>
<comment type="interaction">
    <interactant intactId="EBI-4397720">
        <id>Q8TDB4</id>
    </interactant>
    <interactant intactId="EBI-985879">
        <id>P37840</id>
        <label>SNCA</label>
    </interactant>
    <organismsDiffer>false</organismsDiffer>
    <experiments>3</experiments>
</comment>
<comment type="interaction">
    <interactant intactId="EBI-4397720">
        <id>Q8TDB4</id>
    </interactant>
    <interactant intactId="EBI-990792">
        <id>P00441</id>
        <label>SOD1</label>
    </interactant>
    <organismsDiffer>false</organismsDiffer>
    <experiments>3</experiments>
</comment>
<comment type="interaction">
    <interactant intactId="EBI-4397720">
        <id>Q8TDB4</id>
    </interactant>
    <interactant intactId="EBI-372899">
        <id>Q13148</id>
        <label>TARDBP</label>
    </interactant>
    <organismsDiffer>false</organismsDiffer>
    <experiments>6</experiments>
</comment>
<comment type="interaction">
    <interactant intactId="EBI-4397720">
        <id>Q8TDB4</id>
    </interactant>
    <interactant intactId="EBI-25847109">
        <id>O14656-2</id>
        <label>TOR1A</label>
    </interactant>
    <organismsDiffer>false</organismsDiffer>
    <experiments>3</experiments>
</comment>
<comment type="subcellular location">
    <subcellularLocation>
        <location evidence="6 9">Mitochondrion</location>
    </subcellularLocation>
    <subcellularLocation>
        <location evidence="1">Mitochondrion outer membrane</location>
        <topology evidence="1">Single-pass type IV membrane protein</topology>
        <orientation evidence="1">Cytoplasmic side</orientation>
    </subcellularLocation>
    <subcellularLocation>
        <location evidence="1">Mitochondrion inner membrane</location>
        <topology evidence="1">Single-pass type IV membrane protein</topology>
        <orientation evidence="1">Cytoplasmic side</orientation>
    </subcellularLocation>
    <text evidence="1">Colocalizes with RHOT1, RHOT2, TRAK1 and TRAK2 at the mitochondrion.</text>
</comment>
<comment type="tissue specificity">
    <text evidence="4 5 6 7 8">Expressed in the brain, adrenal gland and corneal endothelium (CE). Expressed in steroid-producing cells of the ovary and testis (at protein level). Expressed in steroid-producing cells of the ovary and testis. Weakly expressed in placenta. Expressed in corneal endothelial cells.</text>
</comment>
<sequence>MYLRRAVSKTLALPLRAPPNPAPLGKDASLRRMSSNRFPGSSGSNMIYYLVVGVTVSAGGYYAYKTVTSDQAKHTEHKTNLKEKTKAEIHPFQGEKENVAETEKASSEAPEELIVEAEVVDAEESPSATVVVIKEASACPGHVEAAPETTAVSAETGPEVTDAAARETTEVNPETTPEVTNAALDEAVTIDNDKDTTKNETSDEYAELEEENSPAESESSAGDDLQEEASVGSEAASAQG</sequence>
<name>HUMMR_HUMAN</name>
<evidence type="ECO:0000250" key="1">
    <source>
        <dbReference type="UniProtKB" id="Q8VI64"/>
    </source>
</evidence>
<evidence type="ECO:0000255" key="2"/>
<evidence type="ECO:0000256" key="3">
    <source>
        <dbReference type="SAM" id="MobiDB-lite"/>
    </source>
</evidence>
<evidence type="ECO:0000269" key="4">
    <source>
    </source>
</evidence>
<evidence type="ECO:0000269" key="5">
    <source>
    </source>
</evidence>
<evidence type="ECO:0000269" key="6">
    <source>
    </source>
</evidence>
<evidence type="ECO:0000269" key="7">
    <source>
    </source>
</evidence>
<evidence type="ECO:0000269" key="8">
    <source>
    </source>
</evidence>
<evidence type="ECO:0000269" key="9">
    <source>
    </source>
</evidence>
<evidence type="ECO:0000305" key="10"/>
<accession>Q8TDB4</accession>
<accession>Q9BZC3</accession>